<dbReference type="EMBL" id="AM180252">
    <property type="protein sequence ID" value="CAJ76119.1"/>
    <property type="molecule type" value="Genomic_DNA"/>
</dbReference>
<dbReference type="RefSeq" id="WP_011526487.1">
    <property type="nucleotide sequence ID" value="NC_008011.1"/>
</dbReference>
<dbReference type="SMR" id="Q1MP34"/>
<dbReference type="STRING" id="363253.LI0402"/>
<dbReference type="KEGG" id="lip:LI0402"/>
<dbReference type="eggNOG" id="COG0224">
    <property type="taxonomic scope" value="Bacteria"/>
</dbReference>
<dbReference type="HOGENOM" id="CLU_050669_0_1_7"/>
<dbReference type="OrthoDB" id="9812769at2"/>
<dbReference type="Proteomes" id="UP000002430">
    <property type="component" value="Chromosome"/>
</dbReference>
<dbReference type="GO" id="GO:0005886">
    <property type="term" value="C:plasma membrane"/>
    <property type="evidence" value="ECO:0007669"/>
    <property type="project" value="UniProtKB-SubCell"/>
</dbReference>
<dbReference type="GO" id="GO:0045259">
    <property type="term" value="C:proton-transporting ATP synthase complex"/>
    <property type="evidence" value="ECO:0007669"/>
    <property type="project" value="UniProtKB-KW"/>
</dbReference>
<dbReference type="GO" id="GO:0005524">
    <property type="term" value="F:ATP binding"/>
    <property type="evidence" value="ECO:0007669"/>
    <property type="project" value="UniProtKB-UniRule"/>
</dbReference>
<dbReference type="GO" id="GO:0046933">
    <property type="term" value="F:proton-transporting ATP synthase activity, rotational mechanism"/>
    <property type="evidence" value="ECO:0007669"/>
    <property type="project" value="UniProtKB-UniRule"/>
</dbReference>
<dbReference type="GO" id="GO:0042777">
    <property type="term" value="P:proton motive force-driven plasma membrane ATP synthesis"/>
    <property type="evidence" value="ECO:0007669"/>
    <property type="project" value="UniProtKB-UniRule"/>
</dbReference>
<dbReference type="CDD" id="cd12151">
    <property type="entry name" value="F1-ATPase_gamma"/>
    <property type="match status" value="1"/>
</dbReference>
<dbReference type="Gene3D" id="3.40.1380.10">
    <property type="match status" value="1"/>
</dbReference>
<dbReference type="Gene3D" id="1.10.287.80">
    <property type="entry name" value="ATP synthase, gamma subunit, helix hairpin domain"/>
    <property type="match status" value="1"/>
</dbReference>
<dbReference type="HAMAP" id="MF_00815">
    <property type="entry name" value="ATP_synth_gamma_bact"/>
    <property type="match status" value="1"/>
</dbReference>
<dbReference type="InterPro" id="IPR035968">
    <property type="entry name" value="ATP_synth_F1_ATPase_gsu"/>
</dbReference>
<dbReference type="InterPro" id="IPR000131">
    <property type="entry name" value="ATP_synth_F1_gsu"/>
</dbReference>
<dbReference type="InterPro" id="IPR023632">
    <property type="entry name" value="ATP_synth_F1_gsu_CS"/>
</dbReference>
<dbReference type="NCBIfam" id="TIGR01146">
    <property type="entry name" value="ATPsyn_F1gamma"/>
    <property type="match status" value="1"/>
</dbReference>
<dbReference type="NCBIfam" id="NF009957">
    <property type="entry name" value="PRK13424.1"/>
    <property type="match status" value="1"/>
</dbReference>
<dbReference type="PANTHER" id="PTHR11693">
    <property type="entry name" value="ATP SYNTHASE GAMMA CHAIN"/>
    <property type="match status" value="1"/>
</dbReference>
<dbReference type="PANTHER" id="PTHR11693:SF22">
    <property type="entry name" value="ATP SYNTHASE SUBUNIT GAMMA, MITOCHONDRIAL"/>
    <property type="match status" value="1"/>
</dbReference>
<dbReference type="Pfam" id="PF00231">
    <property type="entry name" value="ATP-synt"/>
    <property type="match status" value="1"/>
</dbReference>
<dbReference type="PRINTS" id="PR00126">
    <property type="entry name" value="ATPASEGAMMA"/>
</dbReference>
<dbReference type="SUPFAM" id="SSF52943">
    <property type="entry name" value="ATP synthase (F1-ATPase), gamma subunit"/>
    <property type="match status" value="1"/>
</dbReference>
<dbReference type="PROSITE" id="PS00153">
    <property type="entry name" value="ATPASE_GAMMA"/>
    <property type="match status" value="1"/>
</dbReference>
<name>ATPG_LAWIP</name>
<accession>Q1MP34</accession>
<sequence length="289" mass="32537">MASLKDVKIKIAGVRKTKQITKAMNMVASAKLRGAQIKIEHFRPYAEKFQDVISNLATRSDETVHKLLEKRTNGTSCIFILITSDRGLCGIFNTMLIIKALELAKQKTTKGKKVSFICIGRKGRDAIKKTHYPILSDYSDKFTRDYQLASHISEKVIDGYLTVNMDEVVLIYGQFINAMRQIVGFSTLLPIHPKPLDKEQLEKYSEYIYEPGVAILLSELLPKFVTTQIYRGFLDTDASENAARMTAMDNATRNCDELIGNLTRLYNKTRQASITSELIDIVSGAEALK</sequence>
<organism>
    <name type="scientific">Lawsonia intracellularis (strain PHE/MN1-00)</name>
    <dbReference type="NCBI Taxonomy" id="363253"/>
    <lineage>
        <taxon>Bacteria</taxon>
        <taxon>Pseudomonadati</taxon>
        <taxon>Thermodesulfobacteriota</taxon>
        <taxon>Desulfovibrionia</taxon>
        <taxon>Desulfovibrionales</taxon>
        <taxon>Desulfovibrionaceae</taxon>
        <taxon>Lawsonia</taxon>
    </lineage>
</organism>
<comment type="function">
    <text evidence="1">Produces ATP from ADP in the presence of a proton gradient across the membrane. The gamma chain is believed to be important in regulating ATPase activity and the flow of protons through the CF(0) complex.</text>
</comment>
<comment type="subunit">
    <text evidence="1">F-type ATPases have 2 components, CF(1) - the catalytic core - and CF(0) - the membrane proton channel. CF(1) has five subunits: alpha(3), beta(3), gamma(1), delta(1), epsilon(1). CF(0) has three main subunits: a, b and c.</text>
</comment>
<comment type="subcellular location">
    <subcellularLocation>
        <location evidence="1">Cell membrane</location>
        <topology evidence="1">Peripheral membrane protein</topology>
    </subcellularLocation>
</comment>
<comment type="similarity">
    <text evidence="1">Belongs to the ATPase gamma chain family.</text>
</comment>
<reference key="1">
    <citation type="submission" date="2005-11" db="EMBL/GenBank/DDBJ databases">
        <title>The complete genome sequence of Lawsonia intracellularis: the causative agent of proliferative enteropathy.</title>
        <authorList>
            <person name="Kaur K."/>
            <person name="Zhang Q."/>
            <person name="Beckler D."/>
            <person name="Munir S."/>
            <person name="Li L."/>
            <person name="Kinsley K."/>
            <person name="Herron L."/>
            <person name="Peterson A."/>
            <person name="May B."/>
            <person name="Singh S."/>
            <person name="Gebhart C."/>
            <person name="Kapur V."/>
        </authorList>
    </citation>
    <scope>NUCLEOTIDE SEQUENCE [LARGE SCALE GENOMIC DNA]</scope>
    <source>
        <strain>PHE/MN1-00</strain>
    </source>
</reference>
<protein>
    <recommendedName>
        <fullName evidence="1">ATP synthase gamma chain</fullName>
    </recommendedName>
    <alternativeName>
        <fullName evidence="1">ATP synthase F1 sector gamma subunit</fullName>
    </alternativeName>
    <alternativeName>
        <fullName evidence="1">F-ATPase gamma subunit</fullName>
    </alternativeName>
</protein>
<gene>
    <name evidence="1" type="primary">atpG</name>
    <name type="ordered locus">LI0402</name>
</gene>
<evidence type="ECO:0000255" key="1">
    <source>
        <dbReference type="HAMAP-Rule" id="MF_00815"/>
    </source>
</evidence>
<keyword id="KW-0066">ATP synthesis</keyword>
<keyword id="KW-1003">Cell membrane</keyword>
<keyword id="KW-0139">CF(1)</keyword>
<keyword id="KW-0375">Hydrogen ion transport</keyword>
<keyword id="KW-0406">Ion transport</keyword>
<keyword id="KW-0472">Membrane</keyword>
<keyword id="KW-1185">Reference proteome</keyword>
<keyword id="KW-0813">Transport</keyword>
<proteinExistence type="inferred from homology"/>
<feature type="chain" id="PRO_1000053241" description="ATP synthase gamma chain">
    <location>
        <begin position="1"/>
        <end position="289"/>
    </location>
</feature>